<sequence>MTIIRKKHPLIKIINHSFIDLPAPSNISSWWNFGSLLGLCLIIQILTGLFLAMHYTSDTTTAFSSVAHICRDVNYGWLIRYMHANGASMFFICLFLHVGRGVYYGSYNMIETWNMGIVLLFAVMATAFMGYVLPWGQMSFWGATVITNLLSAIPYIGTTLVEWIWGGFSVDKATLTRFFAFHFILPFIITALVLVHLLFLHETGSNNPTGLNSDADKIPFHPYYTVKDFLGVLILLMAFMILTLFFPDILGDPDNYTPANPLNTPPHIKPEWYFLFAYAILRSIPNKLGGVLALILSILILALMPLLHTSKQRALTFRPITQTMYWILVADLLILTWIGGQPVEYPFIIIGQTASIAYFAIIVIFMPIAGMIENNILDLD</sequence>
<dbReference type="EMBL" id="AF163892">
    <property type="protein sequence ID" value="AAF97416.1"/>
    <property type="molecule type" value="Genomic_DNA"/>
</dbReference>
<dbReference type="SMR" id="Q9MI37"/>
<dbReference type="GO" id="GO:0005743">
    <property type="term" value="C:mitochondrial inner membrane"/>
    <property type="evidence" value="ECO:0007669"/>
    <property type="project" value="UniProtKB-SubCell"/>
</dbReference>
<dbReference type="GO" id="GO:0045275">
    <property type="term" value="C:respiratory chain complex III"/>
    <property type="evidence" value="ECO:0007669"/>
    <property type="project" value="InterPro"/>
</dbReference>
<dbReference type="GO" id="GO:0046872">
    <property type="term" value="F:metal ion binding"/>
    <property type="evidence" value="ECO:0007669"/>
    <property type="project" value="UniProtKB-KW"/>
</dbReference>
<dbReference type="GO" id="GO:0008121">
    <property type="term" value="F:ubiquinol-cytochrome-c reductase activity"/>
    <property type="evidence" value="ECO:0007669"/>
    <property type="project" value="InterPro"/>
</dbReference>
<dbReference type="GO" id="GO:0006122">
    <property type="term" value="P:mitochondrial electron transport, ubiquinol to cytochrome c"/>
    <property type="evidence" value="ECO:0007669"/>
    <property type="project" value="TreeGrafter"/>
</dbReference>
<dbReference type="CDD" id="cd00290">
    <property type="entry name" value="cytochrome_b_C"/>
    <property type="match status" value="1"/>
</dbReference>
<dbReference type="CDD" id="cd00284">
    <property type="entry name" value="Cytochrome_b_N"/>
    <property type="match status" value="1"/>
</dbReference>
<dbReference type="FunFam" id="1.20.810.10:FF:000002">
    <property type="entry name" value="Cytochrome b"/>
    <property type="match status" value="1"/>
</dbReference>
<dbReference type="Gene3D" id="1.20.810.10">
    <property type="entry name" value="Cytochrome Bc1 Complex, Chain C"/>
    <property type="match status" value="1"/>
</dbReference>
<dbReference type="InterPro" id="IPR005798">
    <property type="entry name" value="Cyt_b/b6_C"/>
</dbReference>
<dbReference type="InterPro" id="IPR036150">
    <property type="entry name" value="Cyt_b/b6_C_sf"/>
</dbReference>
<dbReference type="InterPro" id="IPR005797">
    <property type="entry name" value="Cyt_b/b6_N"/>
</dbReference>
<dbReference type="InterPro" id="IPR027387">
    <property type="entry name" value="Cytb/b6-like_sf"/>
</dbReference>
<dbReference type="InterPro" id="IPR030689">
    <property type="entry name" value="Cytochrome_b"/>
</dbReference>
<dbReference type="InterPro" id="IPR048260">
    <property type="entry name" value="Cytochrome_b_C_euk/bac"/>
</dbReference>
<dbReference type="InterPro" id="IPR048259">
    <property type="entry name" value="Cytochrome_b_N_euk/bac"/>
</dbReference>
<dbReference type="InterPro" id="IPR016174">
    <property type="entry name" value="Di-haem_cyt_TM"/>
</dbReference>
<dbReference type="PANTHER" id="PTHR19271">
    <property type="entry name" value="CYTOCHROME B"/>
    <property type="match status" value="1"/>
</dbReference>
<dbReference type="PANTHER" id="PTHR19271:SF16">
    <property type="entry name" value="CYTOCHROME B"/>
    <property type="match status" value="1"/>
</dbReference>
<dbReference type="Pfam" id="PF00032">
    <property type="entry name" value="Cytochrom_B_C"/>
    <property type="match status" value="1"/>
</dbReference>
<dbReference type="Pfam" id="PF00033">
    <property type="entry name" value="Cytochrome_B"/>
    <property type="match status" value="1"/>
</dbReference>
<dbReference type="PIRSF" id="PIRSF038885">
    <property type="entry name" value="COB"/>
    <property type="match status" value="1"/>
</dbReference>
<dbReference type="SUPFAM" id="SSF81648">
    <property type="entry name" value="a domain/subunit of cytochrome bc1 complex (Ubiquinol-cytochrome c reductase)"/>
    <property type="match status" value="1"/>
</dbReference>
<dbReference type="SUPFAM" id="SSF81342">
    <property type="entry name" value="Transmembrane di-heme cytochromes"/>
    <property type="match status" value="1"/>
</dbReference>
<dbReference type="PROSITE" id="PS51003">
    <property type="entry name" value="CYTB_CTER"/>
    <property type="match status" value="1"/>
</dbReference>
<dbReference type="PROSITE" id="PS51002">
    <property type="entry name" value="CYTB_NTER"/>
    <property type="match status" value="1"/>
</dbReference>
<accession>Q9MI37</accession>
<name>CYB_MICCN</name>
<evidence type="ECO:0000250" key="1"/>
<evidence type="ECO:0000250" key="2">
    <source>
        <dbReference type="UniProtKB" id="P00157"/>
    </source>
</evidence>
<evidence type="ECO:0000255" key="3">
    <source>
        <dbReference type="PROSITE-ProRule" id="PRU00967"/>
    </source>
</evidence>
<evidence type="ECO:0000255" key="4">
    <source>
        <dbReference type="PROSITE-ProRule" id="PRU00968"/>
    </source>
</evidence>
<geneLocation type="mitochondrion"/>
<proteinExistence type="inferred from homology"/>
<comment type="function">
    <text evidence="2">Component of the ubiquinol-cytochrome c reductase complex (complex III or cytochrome b-c1 complex) that is part of the mitochondrial respiratory chain. The b-c1 complex mediates electron transfer from ubiquinol to cytochrome c. Contributes to the generation of a proton gradient across the mitochondrial membrane that is then used for ATP synthesis.</text>
</comment>
<comment type="cofactor">
    <cofactor evidence="2">
        <name>heme b</name>
        <dbReference type="ChEBI" id="CHEBI:60344"/>
    </cofactor>
    <text evidence="2">Binds 2 heme b groups non-covalently.</text>
</comment>
<comment type="subunit">
    <text evidence="2">The cytochrome bc1 complex contains 11 subunits: 3 respiratory subunits (MT-CYB, CYC1 and UQCRFS1), 2 core proteins (UQCRC1 and UQCRC2) and 6 low-molecular weight proteins (UQCRH/QCR6, UQCRB/QCR7, UQCRQ/QCR8, UQCR10/QCR9, UQCR11/QCR10 and a cleavage product of UQCRFS1). This cytochrome bc1 complex then forms a dimer.</text>
</comment>
<comment type="subcellular location">
    <subcellularLocation>
        <location evidence="2">Mitochondrion inner membrane</location>
        <topology evidence="2">Multi-pass membrane protein</topology>
    </subcellularLocation>
</comment>
<comment type="miscellaneous">
    <text evidence="1">Heme 1 (or BL or b562) is low-potential and absorbs at about 562 nm, and heme 2 (or BH or b566) is high-potential and absorbs at about 566 nm.</text>
</comment>
<comment type="similarity">
    <text evidence="3 4">Belongs to the cytochrome b family.</text>
</comment>
<comment type="caution">
    <text evidence="2">The full-length protein contains only eight transmembrane helices, not nine as predicted by bioinformatics tools.</text>
</comment>
<reference key="1">
    <citation type="journal article" date="2000" name="J. Mammal.">
        <title>Molecular systematics of a holarctic rodent (Microtus, Muridae).</title>
        <authorList>
            <person name="Conroy C.J."/>
            <person name="Cook J.A."/>
        </authorList>
    </citation>
    <scope>NUCLEOTIDE SEQUENCE [GENOMIC DNA]</scope>
</reference>
<gene>
    <name type="primary">MT-CYB</name>
    <name type="synonym">COB</name>
    <name type="synonym">CYTB</name>
    <name type="synonym">MTCYB</name>
</gene>
<feature type="chain" id="PRO_0000255075" description="Cytochrome b">
    <location>
        <begin position="1"/>
        <end position="380"/>
    </location>
</feature>
<feature type="transmembrane region" description="Helical" evidence="2">
    <location>
        <begin position="33"/>
        <end position="53"/>
    </location>
</feature>
<feature type="transmembrane region" description="Helical" evidence="2">
    <location>
        <begin position="77"/>
        <end position="98"/>
    </location>
</feature>
<feature type="transmembrane region" description="Helical" evidence="2">
    <location>
        <begin position="113"/>
        <end position="133"/>
    </location>
</feature>
<feature type="transmembrane region" description="Helical" evidence="2">
    <location>
        <begin position="178"/>
        <end position="198"/>
    </location>
</feature>
<feature type="transmembrane region" description="Helical" evidence="2">
    <location>
        <begin position="226"/>
        <end position="246"/>
    </location>
</feature>
<feature type="transmembrane region" description="Helical" evidence="2">
    <location>
        <begin position="288"/>
        <end position="308"/>
    </location>
</feature>
<feature type="transmembrane region" description="Helical" evidence="2">
    <location>
        <begin position="320"/>
        <end position="340"/>
    </location>
</feature>
<feature type="transmembrane region" description="Helical" evidence="2">
    <location>
        <begin position="347"/>
        <end position="367"/>
    </location>
</feature>
<feature type="binding site" description="axial binding residue" evidence="2">
    <location>
        <position position="83"/>
    </location>
    <ligand>
        <name>heme b</name>
        <dbReference type="ChEBI" id="CHEBI:60344"/>
        <label>b562</label>
    </ligand>
    <ligandPart>
        <name>Fe</name>
        <dbReference type="ChEBI" id="CHEBI:18248"/>
    </ligandPart>
</feature>
<feature type="binding site" description="axial binding residue" evidence="2">
    <location>
        <position position="97"/>
    </location>
    <ligand>
        <name>heme b</name>
        <dbReference type="ChEBI" id="CHEBI:60344"/>
        <label>b566</label>
    </ligand>
    <ligandPart>
        <name>Fe</name>
        <dbReference type="ChEBI" id="CHEBI:18248"/>
    </ligandPart>
</feature>
<feature type="binding site" description="axial binding residue" evidence="2">
    <location>
        <position position="182"/>
    </location>
    <ligand>
        <name>heme b</name>
        <dbReference type="ChEBI" id="CHEBI:60344"/>
        <label>b562</label>
    </ligand>
    <ligandPart>
        <name>Fe</name>
        <dbReference type="ChEBI" id="CHEBI:18248"/>
    </ligandPart>
</feature>
<feature type="binding site" description="axial binding residue" evidence="2">
    <location>
        <position position="196"/>
    </location>
    <ligand>
        <name>heme b</name>
        <dbReference type="ChEBI" id="CHEBI:60344"/>
        <label>b566</label>
    </ligand>
    <ligandPart>
        <name>Fe</name>
        <dbReference type="ChEBI" id="CHEBI:18248"/>
    </ligandPart>
</feature>
<feature type="binding site" evidence="2">
    <location>
        <position position="201"/>
    </location>
    <ligand>
        <name>a ubiquinone</name>
        <dbReference type="ChEBI" id="CHEBI:16389"/>
    </ligand>
</feature>
<keyword id="KW-0249">Electron transport</keyword>
<keyword id="KW-0349">Heme</keyword>
<keyword id="KW-0408">Iron</keyword>
<keyword id="KW-0472">Membrane</keyword>
<keyword id="KW-0479">Metal-binding</keyword>
<keyword id="KW-0496">Mitochondrion</keyword>
<keyword id="KW-0999">Mitochondrion inner membrane</keyword>
<keyword id="KW-0679">Respiratory chain</keyword>
<keyword id="KW-0812">Transmembrane</keyword>
<keyword id="KW-1133">Transmembrane helix</keyword>
<keyword id="KW-0813">Transport</keyword>
<keyword id="KW-0830">Ubiquinone</keyword>
<protein>
    <recommendedName>
        <fullName>Cytochrome b</fullName>
    </recommendedName>
    <alternativeName>
        <fullName>Complex III subunit 3</fullName>
    </alternativeName>
    <alternativeName>
        <fullName>Complex III subunit III</fullName>
    </alternativeName>
    <alternativeName>
        <fullName>Cytochrome b-c1 complex subunit 3</fullName>
    </alternativeName>
    <alternativeName>
        <fullName>Ubiquinol-cytochrome-c reductase complex cytochrome b subunit</fullName>
    </alternativeName>
</protein>
<organism>
    <name type="scientific">Microtus canicaudus</name>
    <name type="common">Gray-tailed vole</name>
    <dbReference type="NCBI Taxonomy" id="100896"/>
    <lineage>
        <taxon>Eukaryota</taxon>
        <taxon>Metazoa</taxon>
        <taxon>Chordata</taxon>
        <taxon>Craniata</taxon>
        <taxon>Vertebrata</taxon>
        <taxon>Euteleostomi</taxon>
        <taxon>Mammalia</taxon>
        <taxon>Eutheria</taxon>
        <taxon>Euarchontoglires</taxon>
        <taxon>Glires</taxon>
        <taxon>Rodentia</taxon>
        <taxon>Myomorpha</taxon>
        <taxon>Muroidea</taxon>
        <taxon>Cricetidae</taxon>
        <taxon>Arvicolinae</taxon>
        <taxon>Microtus</taxon>
    </lineage>
</organism>